<proteinExistence type="evidence at transcript level"/>
<name>VGR_SOLIN</name>
<evidence type="ECO:0000255" key="1"/>
<evidence type="ECO:0000255" key="2">
    <source>
        <dbReference type="PROSITE-ProRule" id="PRU00124"/>
    </source>
</evidence>
<evidence type="ECO:0000269" key="3">
    <source>
    </source>
</evidence>
<evidence type="ECO:0000303" key="4">
    <source>
    </source>
</evidence>
<evidence type="ECO:0000305" key="5"/>
<evidence type="ECO:0000312" key="6">
    <source>
        <dbReference type="EMBL" id="AAP92450.1"/>
    </source>
</evidence>
<protein>
    <recommendedName>
        <fullName evidence="6">Vitellogenin receptor</fullName>
        <shortName evidence="4">SiVgR</shortName>
    </recommendedName>
</protein>
<reference evidence="5 6" key="1">
    <citation type="journal article" date="2004" name="Insect Mol. Biol.">
        <title>cDNA cloning and transcriptional regulation of the vitellogenin receptor from the imported fire ant, Solenopsis invicta Buren (Hymenoptera: Formicidae).</title>
        <authorList>
            <person name="Chen M.-E."/>
            <person name="Lewis D.K."/>
            <person name="Keeley L.L."/>
            <person name="Pietrantonio P.V."/>
        </authorList>
    </citation>
    <scope>NUCLEOTIDE SEQUENCE [MRNA]</scope>
    <scope>FUNCTION</scope>
    <scope>TISSUE SPECIFICITY</scope>
    <scope>DEVELOPMENTAL STAGE</scope>
</reference>
<accession>Q6X0I2</accession>
<sequence>MRFIVLLFICSFIYPCYVSSIGFRRISKVSLKKTKCEDGYFQCNSGECIPVDKKCDYIDHCIDGSDEDFECDHLDEKSFITCAKDQFKCKNQECIPAAKYCDMVNDCLDESDEHDGCVKHLNCTNKFLCTDGHCINKEWVCDGRNDCPDGNDEWNCKANKTSSASSCKTENYQYMCANHRCISLKVVCDKKDDCGDGSDEGPGCTQFNCSSAGCQSNCHQTPKGSVCTCKPGYKLQKDNRTCNDIDECQAYGICDQDCMNVPGSYACTCQREYYLENDKRTCKARAGEATLVFSTRTSILGMHVDSEKFFSLATNLNHAVGVAMYGDYVYWSNLEENGYNTIVKKRTYHPQAPNEVIVTTGLALITGIDVDWITKNIYFADEDNHCIGVCTNDGTYCTVLIKDTDKPTGVALLPTQGKMYWSDWGTFPHIAVAGMDGKNVRIFVNVKLEWPKSVTIDYPNERLYWVDAKSKMIESVRLDGTDRRIVLHDIIQEPFSMTVFQNKLYWSDWESNGIQTCNKFTGKDWKILIRNHNKPYSVHMDHSAIKPNIDNPCYSNPCSQLCMLNQNKGYTCGCTLDKKLNADKHTCQDVKKNQHLLIIQGRKFINYYHEFLGKPKVMTLSLQHMSQQSYNNLVNIISDPLSGQIIICHLQLSTPFLTSTTDILRYDPVHHSSEKIVTINKIFFELAFDYIGNNLYTTNTVNQSIEVINLNTKAMTAFYFKDEVPKYIALAPEESKMFVAFQKSMHSISGLTLYEMQMNGLGKRKLIREGLIGPQLPMYYDRDSKTLFVSDLLPGYIYSHSAQDTRILRSGLKSPHSLTVAGDNLFWIESQNKLYSTNFRTASVKQKTVEFDLSKLNDNMTSLPGHLTPYSRDAQYVVTLRKDDIPKHDCQKNNGNCSHVCLPSLITSFICACPPGMELSNDNRTCISHHECSKNEYKCSEHNICIQRNQLCDGIENCPNGEDETSECRIKGRCKENQFMCKNGDCIRLKDRCNSRYDCTDQSDEQNCEKPKCKSDEFQCKFTETCIPKTKMCDSNPDCDDLSDEEDCRKVECTSNEFKCNNGKCIPNTFVCDNDNDCEDGEDEAAEKCYSKIACKMPKMFKCPNGDCISDSLLCNGINDCNDGSDEVHCLSNVTTHLVNCSLNEYRCLGTDICLPKNVRCDGKNDCPQSDDEQNCTYCFENEFACDNKRCIPELWVCDKANDCGDNSDEKNCDGSKRNFIESNECDEFKCSVGTCLPYSKVCDGNRDCPDGSDETGKCQTACTVNNFCKGMCYKTPAGAVCGCQSGYRLAVDMISCEDINECELDICSQMCRNTIGSYECFCKDEFIIRNDKTSCKAVGPAMEFITVTDNDIRKMTHNLHSTTQLLFPLMGVRVSGLDVNAVSDSVYWSNDEFGTIKKLNIRTNEIVTVKIVEHPQALAVDWITGNVYVNDNSHLNTIKVCNLEKGKCATLVKIQDKMKVASVIVDSINRWLFWAEISLEADHPTSKICRTDMTGADMKIIASDLGFVRGMTIDHVKSKLYWSDDFYKTVESSNFDGSQRKVVLTLNMNHALSISIFEQSLYFLSSDNLLSSCKMYGKRSCEHVNIGANNVFRLFSILHISRQVPFANPCDAEYCDYMCVLKKENATCICSDGESIESNSTCNIKNDLKFVESINFSRNTRNISGIYSITIIVLLVSVLLLCVYYYYQKNKLKSKPASNLSCSSIHFQNPSYDRSDEIEVMLDSMASSELSPGQHEYINPINNKGMKAAENNAKKSNQCSEGKNIEEEKQDALIYFVHNSK</sequence>
<keyword id="KW-0106">Calcium</keyword>
<keyword id="KW-1015">Disulfide bond</keyword>
<keyword id="KW-0245">EGF-like domain</keyword>
<keyword id="KW-0254">Endocytosis</keyword>
<keyword id="KW-0325">Glycoprotein</keyword>
<keyword id="KW-0472">Membrane</keyword>
<keyword id="KW-0675">Receptor</keyword>
<keyword id="KW-0677">Repeat</keyword>
<keyword id="KW-0732">Signal</keyword>
<keyword id="KW-0812">Transmembrane</keyword>
<keyword id="KW-1133">Transmembrane helix</keyword>
<organism>
    <name type="scientific">Solenopsis invicta</name>
    <name type="common">Red imported fire ant</name>
    <name type="synonym">Solenopsis wagneri</name>
    <dbReference type="NCBI Taxonomy" id="13686"/>
    <lineage>
        <taxon>Eukaryota</taxon>
        <taxon>Metazoa</taxon>
        <taxon>Ecdysozoa</taxon>
        <taxon>Arthropoda</taxon>
        <taxon>Hexapoda</taxon>
        <taxon>Insecta</taxon>
        <taxon>Pterygota</taxon>
        <taxon>Neoptera</taxon>
        <taxon>Endopterygota</taxon>
        <taxon>Hymenoptera</taxon>
        <taxon>Apocrita</taxon>
        <taxon>Aculeata</taxon>
        <taxon>Formicoidea</taxon>
        <taxon>Formicidae</taxon>
        <taxon>Myrmicinae</taxon>
        <taxon>Solenopsis</taxon>
    </lineage>
</organism>
<gene>
    <name evidence="4" type="primary">VgR</name>
</gene>
<dbReference type="EMBL" id="AY262832">
    <property type="protein sequence ID" value="AAP92450.1"/>
    <property type="molecule type" value="mRNA"/>
</dbReference>
<dbReference type="RefSeq" id="NP_001291525.1">
    <property type="nucleotide sequence ID" value="NM_001304596.1"/>
</dbReference>
<dbReference type="SMR" id="Q6X0I2"/>
<dbReference type="GlyCosmos" id="Q6X0I2">
    <property type="glycosylation" value="14 sites, No reported glycans"/>
</dbReference>
<dbReference type="EnsemblMetazoa" id="NM_001304596.1">
    <property type="protein sequence ID" value="NP_001291525.1"/>
    <property type="gene ID" value="LOC105200757"/>
</dbReference>
<dbReference type="GeneID" id="105200757"/>
<dbReference type="KEGG" id="soc:105200757"/>
<dbReference type="CTD" id="32367"/>
<dbReference type="OrthoDB" id="8831087at2759"/>
<dbReference type="GO" id="GO:0016324">
    <property type="term" value="C:apical plasma membrane"/>
    <property type="evidence" value="ECO:0007669"/>
    <property type="project" value="TreeGrafter"/>
</dbReference>
<dbReference type="GO" id="GO:0043235">
    <property type="term" value="C:receptor complex"/>
    <property type="evidence" value="ECO:0007669"/>
    <property type="project" value="TreeGrafter"/>
</dbReference>
<dbReference type="GO" id="GO:0005509">
    <property type="term" value="F:calcium ion binding"/>
    <property type="evidence" value="ECO:0007669"/>
    <property type="project" value="InterPro"/>
</dbReference>
<dbReference type="GO" id="GO:0038024">
    <property type="term" value="F:cargo receptor activity"/>
    <property type="evidence" value="ECO:0000314"/>
    <property type="project" value="UniProtKB"/>
</dbReference>
<dbReference type="GO" id="GO:0042562">
    <property type="term" value="F:hormone binding"/>
    <property type="evidence" value="ECO:0007669"/>
    <property type="project" value="TreeGrafter"/>
</dbReference>
<dbReference type="GO" id="GO:0006898">
    <property type="term" value="P:receptor-mediated endocytosis"/>
    <property type="evidence" value="ECO:0000314"/>
    <property type="project" value="UniProtKB"/>
</dbReference>
<dbReference type="CDD" id="cd00054">
    <property type="entry name" value="EGF_CA"/>
    <property type="match status" value="1"/>
</dbReference>
<dbReference type="CDD" id="cd00112">
    <property type="entry name" value="LDLa"/>
    <property type="match status" value="12"/>
</dbReference>
<dbReference type="FunFam" id="2.10.25.10:FF:001045">
    <property type="entry name" value="Fibulin 2"/>
    <property type="match status" value="1"/>
</dbReference>
<dbReference type="FunFam" id="2.10.25.10:FF:000505">
    <property type="entry name" value="Low-density lipoprotein receptor-related protein 1"/>
    <property type="match status" value="1"/>
</dbReference>
<dbReference type="FunFam" id="4.10.400.10:FF:000002">
    <property type="entry name" value="Low-density lipoprotein receptor-related protein 1"/>
    <property type="match status" value="1"/>
</dbReference>
<dbReference type="FunFam" id="4.10.400.10:FF:000110">
    <property type="entry name" value="Low-density lipoprotein receptor-related protein 1B"/>
    <property type="match status" value="1"/>
</dbReference>
<dbReference type="FunFam" id="4.10.400.10:FF:000005">
    <property type="entry name" value="low-density lipoprotein receptor-related protein 1B"/>
    <property type="match status" value="1"/>
</dbReference>
<dbReference type="FunFam" id="2.120.10.30:FF:000241">
    <property type="entry name" value="Low-density lipoprotein receptor-related protein 6"/>
    <property type="match status" value="1"/>
</dbReference>
<dbReference type="FunFam" id="2.10.25.10:FF:000037">
    <property type="entry name" value="Signal peptide, CUB domain and EGF-like domain-containing 2"/>
    <property type="match status" value="1"/>
</dbReference>
<dbReference type="FunFam" id="4.10.400.10:FF:000140">
    <property type="entry name" value="Terribly reduced optic lobes, isoform AF"/>
    <property type="match status" value="1"/>
</dbReference>
<dbReference type="FunFam" id="4.10.400.10:FF:000301">
    <property type="entry name" value="Vitellogenin receptor"/>
    <property type="match status" value="1"/>
</dbReference>
<dbReference type="Gene3D" id="2.10.25.10">
    <property type="entry name" value="Laminin"/>
    <property type="match status" value="5"/>
</dbReference>
<dbReference type="Gene3D" id="4.10.400.10">
    <property type="entry name" value="Low-density Lipoprotein Receptor"/>
    <property type="match status" value="12"/>
</dbReference>
<dbReference type="Gene3D" id="2.120.10.30">
    <property type="entry name" value="TolB, C-terminal domain"/>
    <property type="match status" value="3"/>
</dbReference>
<dbReference type="InterPro" id="IPR011042">
    <property type="entry name" value="6-blade_b-propeller_TolB-like"/>
</dbReference>
<dbReference type="InterPro" id="IPR026823">
    <property type="entry name" value="cEGF"/>
</dbReference>
<dbReference type="InterPro" id="IPR001881">
    <property type="entry name" value="EGF-like_Ca-bd_dom"/>
</dbReference>
<dbReference type="InterPro" id="IPR000742">
    <property type="entry name" value="EGF-like_dom"/>
</dbReference>
<dbReference type="InterPro" id="IPR018097">
    <property type="entry name" value="EGF_Ca-bd_CS"/>
</dbReference>
<dbReference type="InterPro" id="IPR009030">
    <property type="entry name" value="Growth_fac_rcpt_cys_sf"/>
</dbReference>
<dbReference type="InterPro" id="IPR036055">
    <property type="entry name" value="LDL_receptor-like_sf"/>
</dbReference>
<dbReference type="InterPro" id="IPR051221">
    <property type="entry name" value="LDLR-related"/>
</dbReference>
<dbReference type="InterPro" id="IPR023415">
    <property type="entry name" value="LDLR_class-A_CS"/>
</dbReference>
<dbReference type="InterPro" id="IPR000033">
    <property type="entry name" value="LDLR_classB_rpt"/>
</dbReference>
<dbReference type="InterPro" id="IPR002172">
    <property type="entry name" value="LDrepeatLR_classA_rpt"/>
</dbReference>
<dbReference type="InterPro" id="IPR049883">
    <property type="entry name" value="NOTCH1_EGF-like"/>
</dbReference>
<dbReference type="PANTHER" id="PTHR22722">
    <property type="entry name" value="LOW-DENSITY LIPOPROTEIN RECEPTOR-RELATED PROTEIN 2-RELATED"/>
    <property type="match status" value="1"/>
</dbReference>
<dbReference type="PANTHER" id="PTHR22722:SF14">
    <property type="entry name" value="MEGALIN, ISOFORM A"/>
    <property type="match status" value="1"/>
</dbReference>
<dbReference type="Pfam" id="PF12662">
    <property type="entry name" value="cEGF"/>
    <property type="match status" value="1"/>
</dbReference>
<dbReference type="Pfam" id="PF07645">
    <property type="entry name" value="EGF_CA"/>
    <property type="match status" value="1"/>
</dbReference>
<dbReference type="Pfam" id="PF14670">
    <property type="entry name" value="FXa_inhibition"/>
    <property type="match status" value="1"/>
</dbReference>
<dbReference type="Pfam" id="PF00057">
    <property type="entry name" value="Ldl_recept_a"/>
    <property type="match status" value="11"/>
</dbReference>
<dbReference type="Pfam" id="PF00058">
    <property type="entry name" value="Ldl_recept_b"/>
    <property type="match status" value="2"/>
</dbReference>
<dbReference type="PRINTS" id="PR00261">
    <property type="entry name" value="LDLRECEPTOR"/>
</dbReference>
<dbReference type="SMART" id="SM00181">
    <property type="entry name" value="EGF"/>
    <property type="match status" value="10"/>
</dbReference>
<dbReference type="SMART" id="SM00179">
    <property type="entry name" value="EGF_CA"/>
    <property type="match status" value="4"/>
</dbReference>
<dbReference type="SMART" id="SM00192">
    <property type="entry name" value="LDLa"/>
    <property type="match status" value="12"/>
</dbReference>
<dbReference type="SMART" id="SM00135">
    <property type="entry name" value="LY"/>
    <property type="match status" value="10"/>
</dbReference>
<dbReference type="SUPFAM" id="SSF57196">
    <property type="entry name" value="EGF/Laminin"/>
    <property type="match status" value="3"/>
</dbReference>
<dbReference type="SUPFAM" id="SSF57184">
    <property type="entry name" value="Growth factor receptor domain"/>
    <property type="match status" value="1"/>
</dbReference>
<dbReference type="SUPFAM" id="SSF57424">
    <property type="entry name" value="LDL receptor-like module"/>
    <property type="match status" value="12"/>
</dbReference>
<dbReference type="SUPFAM" id="SSF63825">
    <property type="entry name" value="YWTD domain"/>
    <property type="match status" value="3"/>
</dbReference>
<dbReference type="PROSITE" id="PS00010">
    <property type="entry name" value="ASX_HYDROXYL"/>
    <property type="match status" value="2"/>
</dbReference>
<dbReference type="PROSITE" id="PS01186">
    <property type="entry name" value="EGF_2"/>
    <property type="match status" value="2"/>
</dbReference>
<dbReference type="PROSITE" id="PS01187">
    <property type="entry name" value="EGF_CA"/>
    <property type="match status" value="2"/>
</dbReference>
<dbReference type="PROSITE" id="PS01209">
    <property type="entry name" value="LDLRA_1"/>
    <property type="match status" value="11"/>
</dbReference>
<dbReference type="PROSITE" id="PS50068">
    <property type="entry name" value="LDLRA_2"/>
    <property type="match status" value="12"/>
</dbReference>
<dbReference type="PROSITE" id="PS51120">
    <property type="entry name" value="LDLRB"/>
    <property type="match status" value="8"/>
</dbReference>
<comment type="function">
    <text evidence="3">Involved in uptake of vitellogenin by endocytosis. Expression is regulated by the juvenile hormone analog, methoprene (in vitro).</text>
</comment>
<comment type="subcellular location">
    <subcellularLocation>
        <location evidence="1">Membrane</location>
        <topology evidence="1">Single-pass membrane protein</topology>
    </subcellularLocation>
</comment>
<comment type="tissue specificity">
    <text evidence="3">Expressed in ovaries of reproductive females.</text>
</comment>
<comment type="developmental stage">
    <text evidence="3">The highest expression levels are seen during the previtellogenic period in virgin alate females, then decrease in reproductive females.</text>
</comment>
<feature type="signal peptide" evidence="1">
    <location>
        <begin position="1"/>
        <end position="18"/>
    </location>
</feature>
<feature type="chain" id="PRO_0000378058" description="Vitellogenin receptor" evidence="1">
    <location>
        <begin position="19"/>
        <end position="1782"/>
    </location>
</feature>
<feature type="topological domain" description="Extracellular" evidence="1">
    <location>
        <begin position="19"/>
        <end position="1663"/>
    </location>
</feature>
<feature type="transmembrane region" description="Helical" evidence="1">
    <location>
        <begin position="1664"/>
        <end position="1684"/>
    </location>
</feature>
<feature type="topological domain" description="Cytoplasmic" evidence="1">
    <location>
        <begin position="1685"/>
        <end position="1782"/>
    </location>
</feature>
<feature type="domain" description="LDL-receptor class A 1" evidence="2">
    <location>
        <begin position="35"/>
        <end position="72"/>
    </location>
</feature>
<feature type="domain" description="LDL-receptor class A 2" evidence="2">
    <location>
        <begin position="81"/>
        <end position="118"/>
    </location>
</feature>
<feature type="domain" description="LDL-receptor class A 3" evidence="2">
    <location>
        <begin position="122"/>
        <end position="157"/>
    </location>
</feature>
<feature type="domain" description="LDL-receptor class A 4" evidence="2">
    <location>
        <begin position="166"/>
        <end position="205"/>
    </location>
</feature>
<feature type="domain" description="EGF-like 1" evidence="1">
    <location>
        <begin position="208"/>
        <end position="243"/>
    </location>
</feature>
<feature type="domain" description="EGF-like; calcium-binding" evidence="1">
    <location>
        <begin position="244"/>
        <end position="283"/>
    </location>
</feature>
<feature type="repeat" description="LDL-receptor class B 1" evidence="1">
    <location>
        <begin position="327"/>
        <end position="374"/>
    </location>
</feature>
<feature type="repeat" description="LDL-receptor class B 2" evidence="1">
    <location>
        <begin position="375"/>
        <end position="416"/>
    </location>
</feature>
<feature type="repeat" description="LDL-receptor class B 3" evidence="1">
    <location>
        <begin position="417"/>
        <end position="460"/>
    </location>
</feature>
<feature type="repeat" description="LDL-receptor class B 4" evidence="1">
    <location>
        <begin position="461"/>
        <end position="501"/>
    </location>
</feature>
<feature type="repeat" description="LDL-receptor class B 5" evidence="1">
    <location>
        <begin position="502"/>
        <end position="544"/>
    </location>
</feature>
<feature type="domain" description="EGF-like 2" evidence="1">
    <location>
        <begin position="552"/>
        <end position="588"/>
    </location>
</feature>
<feature type="domain" description="EGF-like 3" evidence="1">
    <location>
        <begin position="889"/>
        <end position="927"/>
    </location>
</feature>
<feature type="domain" description="LDL-receptor class A 5" evidence="2">
    <location>
        <begin position="931"/>
        <end position="969"/>
    </location>
</feature>
<feature type="domain" description="LDL-receptor class A 6" evidence="2">
    <location>
        <begin position="973"/>
        <end position="1009"/>
    </location>
</feature>
<feature type="domain" description="LDL-receptor class A 7" evidence="2">
    <location>
        <begin position="1012"/>
        <end position="1049"/>
    </location>
</feature>
<feature type="domain" description="LDL-receptor class A 8" evidence="2">
    <location>
        <begin position="1052"/>
        <end position="1090"/>
    </location>
</feature>
<feature type="domain" description="LDL-receptor class A 9" evidence="2">
    <location>
        <begin position="1094"/>
        <end position="1131"/>
    </location>
</feature>
<feature type="domain" description="LDL-receptor class A 10" evidence="2">
    <location>
        <begin position="1140"/>
        <end position="1177"/>
    </location>
</feature>
<feature type="domain" description="LDL-receptor class A 11" evidence="2">
    <location>
        <begin position="1178"/>
        <end position="1214"/>
    </location>
</feature>
<feature type="domain" description="LDL-receptor class A 12" evidence="2">
    <location>
        <begin position="1225"/>
        <end position="1260"/>
    </location>
</feature>
<feature type="domain" description="EGF-like 4" evidence="1">
    <location>
        <begin position="1262"/>
        <end position="1298"/>
    </location>
</feature>
<feature type="repeat" description="LDL-receptor class B 6" evidence="1">
    <location>
        <begin position="1385"/>
        <end position="1425"/>
    </location>
</feature>
<feature type="repeat" description="LDL-receptor class B 7" evidence="1">
    <location>
        <begin position="1471"/>
        <end position="1518"/>
    </location>
</feature>
<feature type="repeat" description="LDL-receptor class B 8" evidence="1">
    <location>
        <begin position="1519"/>
        <end position="1561"/>
    </location>
</feature>
<feature type="glycosylation site" description="N-linked (GlcNAc...) asparagine" evidence="1">
    <location>
        <position position="122"/>
    </location>
</feature>
<feature type="glycosylation site" description="N-linked (GlcNAc...) asparagine" evidence="1">
    <location>
        <position position="159"/>
    </location>
</feature>
<feature type="glycosylation site" description="N-linked (GlcNAc...) asparagine" evidence="1">
    <location>
        <position position="208"/>
    </location>
</feature>
<feature type="glycosylation site" description="N-linked (GlcNAc...) asparagine" evidence="1">
    <location>
        <position position="239"/>
    </location>
</feature>
<feature type="glycosylation site" description="N-linked (GlcNAc...) asparagine" evidence="1">
    <location>
        <position position="702"/>
    </location>
</feature>
<feature type="glycosylation site" description="N-linked (GlcNAc...) asparagine" evidence="1">
    <location>
        <position position="859"/>
    </location>
</feature>
<feature type="glycosylation site" description="N-linked (GlcNAc...) asparagine" evidence="1">
    <location>
        <position position="896"/>
    </location>
</feature>
<feature type="glycosylation site" description="N-linked (GlcNAc...) asparagine" evidence="1">
    <location>
        <position position="923"/>
    </location>
</feature>
<feature type="glycosylation site" description="N-linked (GlcNAc...) asparagine" evidence="1">
    <location>
        <position position="1133"/>
    </location>
</feature>
<feature type="glycosylation site" description="N-linked (GlcNAc...) asparagine" evidence="1">
    <location>
        <position position="1140"/>
    </location>
</feature>
<feature type="glycosylation site" description="N-linked (GlcNAc...) asparagine" evidence="1">
    <location>
        <position position="1175"/>
    </location>
</feature>
<feature type="glycosylation site" description="N-linked (GlcNAc...) asparagine" evidence="1">
    <location>
        <position position="1626"/>
    </location>
</feature>
<feature type="glycosylation site" description="N-linked (GlcNAc...) asparagine" evidence="1">
    <location>
        <position position="1640"/>
    </location>
</feature>
<feature type="glycosylation site" description="N-linked (GlcNAc...) asparagine" evidence="1">
    <location>
        <position position="1656"/>
    </location>
</feature>
<feature type="disulfide bond" evidence="2">
    <location>
        <begin position="36"/>
        <end position="48"/>
    </location>
</feature>
<feature type="disulfide bond" evidence="2">
    <location>
        <begin position="43"/>
        <end position="61"/>
    </location>
</feature>
<feature type="disulfide bond" evidence="2">
    <location>
        <begin position="55"/>
        <end position="71"/>
    </location>
</feature>
<feature type="disulfide bond" evidence="2">
    <location>
        <begin position="82"/>
        <end position="94"/>
    </location>
</feature>
<feature type="disulfide bond" evidence="2">
    <location>
        <begin position="89"/>
        <end position="107"/>
    </location>
</feature>
<feature type="disulfide bond" evidence="2">
    <location>
        <begin position="101"/>
        <end position="117"/>
    </location>
</feature>
<feature type="disulfide bond" evidence="2">
    <location>
        <begin position="123"/>
        <end position="134"/>
    </location>
</feature>
<feature type="disulfide bond" evidence="2">
    <location>
        <begin position="129"/>
        <end position="147"/>
    </location>
</feature>
<feature type="disulfide bond" evidence="2">
    <location>
        <begin position="141"/>
        <end position="156"/>
    </location>
</feature>
<feature type="disulfide bond" evidence="2">
    <location>
        <begin position="167"/>
        <end position="181"/>
    </location>
</feature>
<feature type="disulfide bond" evidence="2">
    <location>
        <begin position="176"/>
        <end position="194"/>
    </location>
</feature>
<feature type="disulfide bond" evidence="2">
    <location>
        <begin position="188"/>
        <end position="204"/>
    </location>
</feature>
<feature type="disulfide bond" evidence="2">
    <location>
        <begin position="248"/>
        <end position="258"/>
    </location>
</feature>
<feature type="disulfide bond" evidence="2">
    <location>
        <begin position="254"/>
        <end position="267"/>
    </location>
</feature>
<feature type="disulfide bond" evidence="2">
    <location>
        <begin position="269"/>
        <end position="282"/>
    </location>
</feature>
<feature type="disulfide bond" evidence="2">
    <location>
        <begin position="932"/>
        <end position="945"/>
    </location>
</feature>
<feature type="disulfide bond" evidence="2">
    <location>
        <begin position="939"/>
        <end position="958"/>
    </location>
</feature>
<feature type="disulfide bond" evidence="2">
    <location>
        <begin position="952"/>
        <end position="968"/>
    </location>
</feature>
<feature type="disulfide bond" evidence="2">
    <location>
        <begin position="974"/>
        <end position="986"/>
    </location>
</feature>
<feature type="disulfide bond" evidence="2">
    <location>
        <begin position="981"/>
        <end position="999"/>
    </location>
</feature>
<feature type="disulfide bond" evidence="2">
    <location>
        <begin position="993"/>
        <end position="1008"/>
    </location>
</feature>
<feature type="disulfide bond" evidence="2">
    <location>
        <begin position="1013"/>
        <end position="1026"/>
    </location>
</feature>
<feature type="disulfide bond" evidence="2">
    <location>
        <begin position="1020"/>
        <end position="1039"/>
    </location>
</feature>
<feature type="disulfide bond" evidence="2">
    <location>
        <begin position="1033"/>
        <end position="1048"/>
    </location>
</feature>
<feature type="disulfide bond" evidence="2">
    <location>
        <begin position="1053"/>
        <end position="1065"/>
    </location>
</feature>
<feature type="disulfide bond" evidence="2">
    <location>
        <begin position="1060"/>
        <end position="1078"/>
    </location>
</feature>
<feature type="disulfide bond" evidence="2">
    <location>
        <begin position="1072"/>
        <end position="1089"/>
    </location>
</feature>
<feature type="disulfide bond" evidence="2">
    <location>
        <begin position="1095"/>
        <end position="1108"/>
    </location>
</feature>
<feature type="disulfide bond" evidence="2">
    <location>
        <begin position="1103"/>
        <end position="1121"/>
    </location>
</feature>
<feature type="disulfide bond" evidence="2">
    <location>
        <begin position="1115"/>
        <end position="1130"/>
    </location>
</feature>
<feature type="disulfide bond" evidence="2">
    <location>
        <begin position="1141"/>
        <end position="1154"/>
    </location>
</feature>
<feature type="disulfide bond" evidence="2">
    <location>
        <begin position="1148"/>
        <end position="1167"/>
    </location>
</feature>
<feature type="disulfide bond" evidence="2">
    <location>
        <begin position="1161"/>
        <end position="1176"/>
    </location>
</feature>
<feature type="disulfide bond" evidence="2">
    <location>
        <begin position="1179"/>
        <end position="1191"/>
    </location>
</feature>
<feature type="disulfide bond" evidence="2">
    <location>
        <begin position="1186"/>
        <end position="1204"/>
    </location>
</feature>
<feature type="disulfide bond" evidence="2">
    <location>
        <begin position="1198"/>
        <end position="1213"/>
    </location>
</feature>
<feature type="disulfide bond" evidence="2">
    <location>
        <begin position="1226"/>
        <end position="1236"/>
    </location>
</feature>
<feature type="disulfide bond" evidence="2">
    <location>
        <begin position="1231"/>
        <end position="1249"/>
    </location>
</feature>
<feature type="disulfide bond" evidence="2">
    <location>
        <begin position="1243"/>
        <end position="1259"/>
    </location>
</feature>